<geneLocation type="chloroplast"/>
<feature type="chain" id="PRO_0000126587" description="Small ribosomal subunit protein uS8c">
    <location>
        <begin position="1"/>
        <end position="134"/>
    </location>
</feature>
<keyword id="KW-0150">Chloroplast</keyword>
<keyword id="KW-0934">Plastid</keyword>
<keyword id="KW-0687">Ribonucleoprotein</keyword>
<keyword id="KW-0689">Ribosomal protein</keyword>
<keyword id="KW-0694">RNA-binding</keyword>
<keyword id="KW-0699">rRNA-binding</keyword>
<reference key="1">
    <citation type="journal article" date="2002" name="DNA Res.">
        <title>Evolutionary re-organisation of a large operon in adzuki bean chloroplast DNA caused by inverted repeat movement.</title>
        <authorList>
            <person name="Perry A.S."/>
            <person name="Brennan S."/>
            <person name="Murphy D.J."/>
            <person name="Kavanagh T.A."/>
            <person name="Wolfe K.H."/>
        </authorList>
    </citation>
    <scope>NUCLEOTIDE SEQUENCE [GENOMIC DNA]</scope>
    <source>
        <strain>cv. Erimo-shozu</strain>
    </source>
</reference>
<gene>
    <name type="primary">rps8</name>
</gene>
<comment type="function">
    <text evidence="1">One of the primary rRNA binding proteins, it binds directly to 16S rRNA central domain where it helps coordinate assembly of the platform of the 30S subunit.</text>
</comment>
<comment type="subunit">
    <text evidence="1">Part of the 30S ribosomal subunit.</text>
</comment>
<comment type="subcellular location">
    <subcellularLocation>
        <location>Plastid</location>
        <location>Chloroplast</location>
    </subcellularLocation>
</comment>
<comment type="similarity">
    <text evidence="2">Belongs to the universal ribosomal protein uS8 family.</text>
</comment>
<organism>
    <name type="scientific">Phaseolus angularis</name>
    <name type="common">Azuki bean</name>
    <name type="synonym">Vigna angularis</name>
    <dbReference type="NCBI Taxonomy" id="3914"/>
    <lineage>
        <taxon>Eukaryota</taxon>
        <taxon>Viridiplantae</taxon>
        <taxon>Streptophyta</taxon>
        <taxon>Embryophyta</taxon>
        <taxon>Tracheophyta</taxon>
        <taxon>Spermatophyta</taxon>
        <taxon>Magnoliopsida</taxon>
        <taxon>eudicotyledons</taxon>
        <taxon>Gunneridae</taxon>
        <taxon>Pentapetalae</taxon>
        <taxon>rosids</taxon>
        <taxon>fabids</taxon>
        <taxon>Fabales</taxon>
        <taxon>Fabaceae</taxon>
        <taxon>Papilionoideae</taxon>
        <taxon>50 kb inversion clade</taxon>
        <taxon>NPAAA clade</taxon>
        <taxon>indigoferoid/millettioid clade</taxon>
        <taxon>Phaseoleae</taxon>
        <taxon>Vigna</taxon>
    </lineage>
</organism>
<sequence length="134" mass="15755">MGKDTIANIITYIRNADMNKKGMVQLPFTNITEKIVKILLREGFVENIRKHRENNKYFLVLTLRYRRNRKESSKNFLNLKRISTPGLRIYYNYQQIPRILGGMGIVILSTSRGIMTDREARLEKIGGEVLCYIW</sequence>
<protein>
    <recommendedName>
        <fullName evidence="2">Small ribosomal subunit protein uS8c</fullName>
    </recommendedName>
    <alternativeName>
        <fullName>30S ribosomal protein S8, chloroplastic</fullName>
    </alternativeName>
</protein>
<evidence type="ECO:0000250" key="1"/>
<evidence type="ECO:0000305" key="2"/>
<accession>P59033</accession>
<name>RR8_PHAAN</name>
<dbReference type="EMBL" id="AF536226">
    <property type="protein sequence ID" value="AAN04895.1"/>
    <property type="molecule type" value="Genomic_DNA"/>
</dbReference>
<dbReference type="RefSeq" id="YP_007889759.1">
    <property type="nucleotide sequence ID" value="NC_021091.1"/>
</dbReference>
<dbReference type="SMR" id="P59033"/>
<dbReference type="GeneID" id="15382683"/>
<dbReference type="KEGG" id="var:15382683"/>
<dbReference type="OrthoDB" id="1339150at2759"/>
<dbReference type="GO" id="GO:0009507">
    <property type="term" value="C:chloroplast"/>
    <property type="evidence" value="ECO:0007669"/>
    <property type="project" value="UniProtKB-SubCell"/>
</dbReference>
<dbReference type="GO" id="GO:1990904">
    <property type="term" value="C:ribonucleoprotein complex"/>
    <property type="evidence" value="ECO:0007669"/>
    <property type="project" value="UniProtKB-KW"/>
</dbReference>
<dbReference type="GO" id="GO:0005840">
    <property type="term" value="C:ribosome"/>
    <property type="evidence" value="ECO:0007669"/>
    <property type="project" value="UniProtKB-KW"/>
</dbReference>
<dbReference type="GO" id="GO:0019843">
    <property type="term" value="F:rRNA binding"/>
    <property type="evidence" value="ECO:0007669"/>
    <property type="project" value="UniProtKB-UniRule"/>
</dbReference>
<dbReference type="GO" id="GO:0003735">
    <property type="term" value="F:structural constituent of ribosome"/>
    <property type="evidence" value="ECO:0007669"/>
    <property type="project" value="InterPro"/>
</dbReference>
<dbReference type="GO" id="GO:0006412">
    <property type="term" value="P:translation"/>
    <property type="evidence" value="ECO:0007669"/>
    <property type="project" value="UniProtKB-UniRule"/>
</dbReference>
<dbReference type="FunFam" id="3.30.1490.10:FF:000001">
    <property type="entry name" value="30S ribosomal protein S8"/>
    <property type="match status" value="1"/>
</dbReference>
<dbReference type="FunFam" id="3.30.1370.30:FF:000004">
    <property type="entry name" value="30S ribosomal protein S8, chloroplastic"/>
    <property type="match status" value="1"/>
</dbReference>
<dbReference type="Gene3D" id="3.30.1370.30">
    <property type="match status" value="1"/>
</dbReference>
<dbReference type="Gene3D" id="3.30.1490.10">
    <property type="match status" value="1"/>
</dbReference>
<dbReference type="HAMAP" id="MF_01302_B">
    <property type="entry name" value="Ribosomal_uS8_B"/>
    <property type="match status" value="1"/>
</dbReference>
<dbReference type="InterPro" id="IPR000630">
    <property type="entry name" value="Ribosomal_uS8"/>
</dbReference>
<dbReference type="InterPro" id="IPR047863">
    <property type="entry name" value="Ribosomal_uS8_CS"/>
</dbReference>
<dbReference type="InterPro" id="IPR035987">
    <property type="entry name" value="Ribosomal_uS8_sf"/>
</dbReference>
<dbReference type="NCBIfam" id="NF001109">
    <property type="entry name" value="PRK00136.1"/>
    <property type="match status" value="1"/>
</dbReference>
<dbReference type="PANTHER" id="PTHR11758">
    <property type="entry name" value="40S RIBOSOMAL PROTEIN S15A"/>
    <property type="match status" value="1"/>
</dbReference>
<dbReference type="Pfam" id="PF00410">
    <property type="entry name" value="Ribosomal_S8"/>
    <property type="match status" value="1"/>
</dbReference>
<dbReference type="SUPFAM" id="SSF56047">
    <property type="entry name" value="Ribosomal protein S8"/>
    <property type="match status" value="1"/>
</dbReference>
<dbReference type="PROSITE" id="PS00053">
    <property type="entry name" value="RIBOSOMAL_S8"/>
    <property type="match status" value="1"/>
</dbReference>
<proteinExistence type="inferred from homology"/>